<gene>
    <name type="primary">SPL12</name>
    <name type="ordered locus">Os06g0703500</name>
    <name type="ordered locus">LOC_Os06g49010</name>
    <name type="ORF">OJ1215_E11.11</name>
    <name evidence="8" type="ORF">OsJ_22552</name>
</gene>
<reference key="1">
    <citation type="journal article" date="2005" name="Nature">
        <title>The map-based sequence of the rice genome.</title>
        <authorList>
            <consortium name="International rice genome sequencing project (IRGSP)"/>
        </authorList>
    </citation>
    <scope>NUCLEOTIDE SEQUENCE [LARGE SCALE GENOMIC DNA]</scope>
    <source>
        <strain>cv. Nipponbare</strain>
    </source>
</reference>
<reference key="2">
    <citation type="journal article" date="2008" name="Nucleic Acids Res.">
        <title>The rice annotation project database (RAP-DB): 2008 update.</title>
        <authorList>
            <consortium name="The rice annotation project (RAP)"/>
        </authorList>
    </citation>
    <scope>GENOME REANNOTATION</scope>
    <source>
        <strain>cv. Nipponbare</strain>
    </source>
</reference>
<reference key="3">
    <citation type="journal article" date="2013" name="Rice">
        <title>Improvement of the Oryza sativa Nipponbare reference genome using next generation sequence and optical map data.</title>
        <authorList>
            <person name="Kawahara Y."/>
            <person name="de la Bastide M."/>
            <person name="Hamilton J.P."/>
            <person name="Kanamori H."/>
            <person name="McCombie W.R."/>
            <person name="Ouyang S."/>
            <person name="Schwartz D.C."/>
            <person name="Tanaka T."/>
            <person name="Wu J."/>
            <person name="Zhou S."/>
            <person name="Childs K.L."/>
            <person name="Davidson R.M."/>
            <person name="Lin H."/>
            <person name="Quesada-Ocampo L."/>
            <person name="Vaillancourt B."/>
            <person name="Sakai H."/>
            <person name="Lee S.S."/>
            <person name="Kim J."/>
            <person name="Numa H."/>
            <person name="Itoh T."/>
            <person name="Buell C.R."/>
            <person name="Matsumoto T."/>
        </authorList>
    </citation>
    <scope>GENOME REANNOTATION</scope>
    <source>
        <strain>cv. Nipponbare</strain>
    </source>
</reference>
<reference key="4">
    <citation type="journal article" date="2005" name="PLoS Biol.">
        <title>The genomes of Oryza sativa: a history of duplications.</title>
        <authorList>
            <person name="Yu J."/>
            <person name="Wang J."/>
            <person name="Lin W."/>
            <person name="Li S."/>
            <person name="Li H."/>
            <person name="Zhou J."/>
            <person name="Ni P."/>
            <person name="Dong W."/>
            <person name="Hu S."/>
            <person name="Zeng C."/>
            <person name="Zhang J."/>
            <person name="Zhang Y."/>
            <person name="Li R."/>
            <person name="Xu Z."/>
            <person name="Li S."/>
            <person name="Li X."/>
            <person name="Zheng H."/>
            <person name="Cong L."/>
            <person name="Lin L."/>
            <person name="Yin J."/>
            <person name="Geng J."/>
            <person name="Li G."/>
            <person name="Shi J."/>
            <person name="Liu J."/>
            <person name="Lv H."/>
            <person name="Li J."/>
            <person name="Wang J."/>
            <person name="Deng Y."/>
            <person name="Ran L."/>
            <person name="Shi X."/>
            <person name="Wang X."/>
            <person name="Wu Q."/>
            <person name="Li C."/>
            <person name="Ren X."/>
            <person name="Wang J."/>
            <person name="Wang X."/>
            <person name="Li D."/>
            <person name="Liu D."/>
            <person name="Zhang X."/>
            <person name="Ji Z."/>
            <person name="Zhao W."/>
            <person name="Sun Y."/>
            <person name="Zhang Z."/>
            <person name="Bao J."/>
            <person name="Han Y."/>
            <person name="Dong L."/>
            <person name="Ji J."/>
            <person name="Chen P."/>
            <person name="Wu S."/>
            <person name="Liu J."/>
            <person name="Xiao Y."/>
            <person name="Bu D."/>
            <person name="Tan J."/>
            <person name="Yang L."/>
            <person name="Ye C."/>
            <person name="Zhang J."/>
            <person name="Xu J."/>
            <person name="Zhou Y."/>
            <person name="Yu Y."/>
            <person name="Zhang B."/>
            <person name="Zhuang S."/>
            <person name="Wei H."/>
            <person name="Liu B."/>
            <person name="Lei M."/>
            <person name="Yu H."/>
            <person name="Li Y."/>
            <person name="Xu H."/>
            <person name="Wei S."/>
            <person name="He X."/>
            <person name="Fang L."/>
            <person name="Zhang Z."/>
            <person name="Zhang Y."/>
            <person name="Huang X."/>
            <person name="Su Z."/>
            <person name="Tong W."/>
            <person name="Li J."/>
            <person name="Tong Z."/>
            <person name="Li S."/>
            <person name="Ye J."/>
            <person name="Wang L."/>
            <person name="Fang L."/>
            <person name="Lei T."/>
            <person name="Chen C.-S."/>
            <person name="Chen H.-C."/>
            <person name="Xu Z."/>
            <person name="Li H."/>
            <person name="Huang H."/>
            <person name="Zhang F."/>
            <person name="Xu H."/>
            <person name="Li N."/>
            <person name="Zhao C."/>
            <person name="Li S."/>
            <person name="Dong L."/>
            <person name="Huang Y."/>
            <person name="Li L."/>
            <person name="Xi Y."/>
            <person name="Qi Q."/>
            <person name="Li W."/>
            <person name="Zhang B."/>
            <person name="Hu W."/>
            <person name="Zhang Y."/>
            <person name="Tian X."/>
            <person name="Jiao Y."/>
            <person name="Liang X."/>
            <person name="Jin J."/>
            <person name="Gao L."/>
            <person name="Zheng W."/>
            <person name="Hao B."/>
            <person name="Liu S.-M."/>
            <person name="Wang W."/>
            <person name="Yuan L."/>
            <person name="Cao M."/>
            <person name="McDermott J."/>
            <person name="Samudrala R."/>
            <person name="Wang J."/>
            <person name="Wong G.K.-S."/>
            <person name="Yang H."/>
        </authorList>
    </citation>
    <scope>NUCLEOTIDE SEQUENCE [LARGE SCALE GENOMIC DNA]</scope>
    <source>
        <strain>cv. Nipponbare</strain>
    </source>
</reference>
<reference key="5">
    <citation type="journal article" date="2003" name="Science">
        <title>Collection, mapping, and annotation of over 28,000 cDNA clones from japonica rice.</title>
        <authorList>
            <consortium name="The rice full-length cDNA consortium"/>
        </authorList>
    </citation>
    <scope>NUCLEOTIDE SEQUENCE [LARGE SCALE MRNA]</scope>
    <source>
        <strain>cv. Nipponbare</strain>
    </source>
</reference>
<reference key="6">
    <citation type="journal article" date="2006" name="Plant Physiol.">
        <title>Genomic organization, differential expression, and interaction of SQUAMOSA promoter-binding-like transcription factors and microRNA156 in rice.</title>
        <authorList>
            <person name="Xie K."/>
            <person name="Wu C."/>
            <person name="Xiong L."/>
        </authorList>
    </citation>
    <scope>TISSUE SPECIFICITY</scope>
    <scope>INDUCTION</scope>
    <scope>GENE FAMILY</scope>
    <scope>NOMENCLATURE</scope>
</reference>
<reference key="7">
    <citation type="journal article" date="2008" name="Gene">
        <title>Comparative study of SBP-box gene family in Arabidopsis and rice.</title>
        <authorList>
            <person name="Yang Z."/>
            <person name="Wang X."/>
            <person name="Gu S."/>
            <person name="Hu Z."/>
            <person name="Xu H."/>
            <person name="Xu C."/>
        </authorList>
    </citation>
    <scope>GENE FAMILY</scope>
</reference>
<sequence>MASFGMNWNQKSPVFWDWENPAPFGPNTMENPKSIPHPEPRGVVVAAANHGSTNSSGGTFTSSSELANGSSKSSLSASFDSSSKLGNSLEFRFASVKGHGKNMCKDGEAGRVEDSGTSPAVAVSHGEPVIGLKLGKRTYFENVCGGQNVKSSSAASGVTCPSTVVKKMKVSQQSTQSSYCQVEGCKVDLSSAREYHRKHKVCEAHSKAPKVIVSGLERRFCQQCSRFHGLAEFDQKKKSCRRRLSDHNARRRKPQQEAISFGSSRLATMFYDARQQTDIYFGQSPFGQVRSNAISSCDNLGGFKFTEAKLPWMKPMKTIGLEDLNFSTLQMPGNVVSHTVHHHDFDGLIPFKGNTPKVLNQGVDPACAVVSSNSNGAPDLRRALSLLSSDSWGPADVQAGSQVHPGGVMPPLAVAAATVTAPTNPVSVMHALHPSTGGGGFWQDGDDPPPLDHASQAQAFMHPGNGSSSGYGHLH</sequence>
<evidence type="ECO:0000250" key="1"/>
<evidence type="ECO:0000255" key="2"/>
<evidence type="ECO:0000255" key="3">
    <source>
        <dbReference type="PROSITE-ProRule" id="PRU00470"/>
    </source>
</evidence>
<evidence type="ECO:0000256" key="4">
    <source>
        <dbReference type="SAM" id="MobiDB-lite"/>
    </source>
</evidence>
<evidence type="ECO:0000269" key="5">
    <source>
    </source>
</evidence>
<evidence type="ECO:0000305" key="6"/>
<evidence type="ECO:0000305" key="7">
    <source>
    </source>
</evidence>
<evidence type="ECO:0000312" key="8">
    <source>
        <dbReference type="EMBL" id="EEE66315.1"/>
    </source>
</evidence>
<comment type="function">
    <text evidence="1">Trans-acting factor that binds specifically to the consensus nucleotide sequence 5'-TNCGTACAA-3' (By similarity). May be involved in panicle development.</text>
</comment>
<comment type="subcellular location">
    <subcellularLocation>
        <location evidence="6">Nucleus</location>
    </subcellularLocation>
</comment>
<comment type="tissue specificity">
    <text evidence="5">Expressed in young panicles.</text>
</comment>
<comment type="induction">
    <text evidence="7">Negatively regulated by microRNAs miR156b and miR156h.</text>
</comment>
<comment type="domain">
    <text evidence="1">The SBP-type zinc finger is required for the binding to DNA.</text>
</comment>
<proteinExistence type="evidence at transcript level"/>
<name>SPL12_ORYSJ</name>
<accession>Q5Z818</accession>
<accession>B7ELT2</accession>
<protein>
    <recommendedName>
        <fullName>Squamosa promoter-binding-like protein 12</fullName>
    </recommendedName>
</protein>
<keyword id="KW-0238">DNA-binding</keyword>
<keyword id="KW-0479">Metal-binding</keyword>
<keyword id="KW-0539">Nucleus</keyword>
<keyword id="KW-1185">Reference proteome</keyword>
<keyword id="KW-0804">Transcription</keyword>
<keyword id="KW-0805">Transcription regulation</keyword>
<keyword id="KW-0862">Zinc</keyword>
<keyword id="KW-0863">Zinc-finger</keyword>
<feature type="chain" id="PRO_0000308238" description="Squamosa promoter-binding-like protein 12">
    <location>
        <begin position="1"/>
        <end position="475"/>
    </location>
</feature>
<feature type="zinc finger region" description="SBP-type" evidence="3">
    <location>
        <begin position="177"/>
        <end position="254"/>
    </location>
</feature>
<feature type="region of interest" description="Disordered" evidence="4">
    <location>
        <begin position="49"/>
        <end position="73"/>
    </location>
</feature>
<feature type="region of interest" description="Disordered" evidence="4">
    <location>
        <begin position="437"/>
        <end position="475"/>
    </location>
</feature>
<feature type="short sequence motif" description="Bipartite nuclear localization signal" evidence="2">
    <location>
        <begin position="237"/>
        <end position="253"/>
    </location>
</feature>
<feature type="compositionally biased region" description="Low complexity" evidence="4">
    <location>
        <begin position="51"/>
        <end position="73"/>
    </location>
</feature>
<feature type="compositionally biased region" description="Polar residues" evidence="4">
    <location>
        <begin position="465"/>
        <end position="475"/>
    </location>
</feature>
<feature type="binding site" evidence="3">
    <location>
        <position position="180"/>
    </location>
    <ligand>
        <name>Zn(2+)</name>
        <dbReference type="ChEBI" id="CHEBI:29105"/>
        <label>1</label>
    </ligand>
</feature>
<feature type="binding site" evidence="3">
    <location>
        <position position="185"/>
    </location>
    <ligand>
        <name>Zn(2+)</name>
        <dbReference type="ChEBI" id="CHEBI:29105"/>
        <label>1</label>
    </ligand>
</feature>
<feature type="binding site" evidence="3">
    <location>
        <position position="202"/>
    </location>
    <ligand>
        <name>Zn(2+)</name>
        <dbReference type="ChEBI" id="CHEBI:29105"/>
        <label>1</label>
    </ligand>
</feature>
<feature type="binding site" evidence="3">
    <location>
        <position position="205"/>
    </location>
    <ligand>
        <name>Zn(2+)</name>
        <dbReference type="ChEBI" id="CHEBI:29105"/>
        <label>1</label>
    </ligand>
</feature>
<feature type="binding site" evidence="3">
    <location>
        <position position="221"/>
    </location>
    <ligand>
        <name>Zn(2+)</name>
        <dbReference type="ChEBI" id="CHEBI:29105"/>
        <label>2</label>
    </ligand>
</feature>
<feature type="binding site" evidence="3">
    <location>
        <position position="224"/>
    </location>
    <ligand>
        <name>Zn(2+)</name>
        <dbReference type="ChEBI" id="CHEBI:29105"/>
        <label>2</label>
    </ligand>
</feature>
<feature type="binding site" evidence="3">
    <location>
        <position position="228"/>
    </location>
    <ligand>
        <name>Zn(2+)</name>
        <dbReference type="ChEBI" id="CHEBI:29105"/>
        <label>2</label>
    </ligand>
</feature>
<feature type="binding site" evidence="3">
    <location>
        <position position="240"/>
    </location>
    <ligand>
        <name>Zn(2+)</name>
        <dbReference type="ChEBI" id="CHEBI:29105"/>
        <label>2</label>
    </ligand>
</feature>
<organism>
    <name type="scientific">Oryza sativa subsp. japonica</name>
    <name type="common">Rice</name>
    <dbReference type="NCBI Taxonomy" id="39947"/>
    <lineage>
        <taxon>Eukaryota</taxon>
        <taxon>Viridiplantae</taxon>
        <taxon>Streptophyta</taxon>
        <taxon>Embryophyta</taxon>
        <taxon>Tracheophyta</taxon>
        <taxon>Spermatophyta</taxon>
        <taxon>Magnoliopsida</taxon>
        <taxon>Liliopsida</taxon>
        <taxon>Poales</taxon>
        <taxon>Poaceae</taxon>
        <taxon>BOP clade</taxon>
        <taxon>Oryzoideae</taxon>
        <taxon>Oryzeae</taxon>
        <taxon>Oryzinae</taxon>
        <taxon>Oryza</taxon>
        <taxon>Oryza sativa</taxon>
    </lineage>
</organism>
<dbReference type="EMBL" id="AP004324">
    <property type="protein sequence ID" value="BAD54038.1"/>
    <property type="molecule type" value="Genomic_DNA"/>
</dbReference>
<dbReference type="EMBL" id="AP008212">
    <property type="protein sequence ID" value="BAF20413.1"/>
    <property type="molecule type" value="Genomic_DNA"/>
</dbReference>
<dbReference type="EMBL" id="AP014962">
    <property type="protein sequence ID" value="BAS99371.1"/>
    <property type="molecule type" value="Genomic_DNA"/>
</dbReference>
<dbReference type="EMBL" id="CM000143">
    <property type="protein sequence ID" value="EEE66315.1"/>
    <property type="molecule type" value="Genomic_DNA"/>
</dbReference>
<dbReference type="EMBL" id="AK073179">
    <property type="protein sequence ID" value="BAG93329.1"/>
    <property type="molecule type" value="mRNA"/>
</dbReference>
<dbReference type="EMBL" id="AK102136">
    <property type="protein sequence ID" value="BAG95406.1"/>
    <property type="molecule type" value="mRNA"/>
</dbReference>
<dbReference type="RefSeq" id="XP_015643448.1">
    <property type="nucleotide sequence ID" value="XM_015787962.1"/>
</dbReference>
<dbReference type="RefSeq" id="XP_015643449.1">
    <property type="nucleotide sequence ID" value="XM_015787963.1"/>
</dbReference>
<dbReference type="RefSeq" id="XP_015643450.1">
    <property type="nucleotide sequence ID" value="XM_015787964.1"/>
</dbReference>
<dbReference type="RefSeq" id="XP_015643451.1">
    <property type="nucleotide sequence ID" value="XM_015787965.1"/>
</dbReference>
<dbReference type="RefSeq" id="XP_015643452.1">
    <property type="nucleotide sequence ID" value="XM_015787966.1"/>
</dbReference>
<dbReference type="RefSeq" id="XP_015643453.1">
    <property type="nucleotide sequence ID" value="XM_015787967.1"/>
</dbReference>
<dbReference type="RefSeq" id="XP_015643454.1">
    <property type="nucleotide sequence ID" value="XM_015787968.1"/>
</dbReference>
<dbReference type="RefSeq" id="XP_015643455.1">
    <property type="nucleotide sequence ID" value="XM_015787969.1"/>
</dbReference>
<dbReference type="RefSeq" id="XP_015643456.1">
    <property type="nucleotide sequence ID" value="XM_015787970.1"/>
</dbReference>
<dbReference type="RefSeq" id="XP_015643457.1">
    <property type="nucleotide sequence ID" value="XM_015787971.1"/>
</dbReference>
<dbReference type="RefSeq" id="XP_015643458.1">
    <property type="nucleotide sequence ID" value="XM_015787972.1"/>
</dbReference>
<dbReference type="RefSeq" id="XP_015643459.1">
    <property type="nucleotide sequence ID" value="XM_015787973.1"/>
</dbReference>
<dbReference type="RefSeq" id="XP_015643461.1">
    <property type="nucleotide sequence ID" value="XM_015787975.1"/>
</dbReference>
<dbReference type="RefSeq" id="XP_015643462.1">
    <property type="nucleotide sequence ID" value="XM_015787976.1"/>
</dbReference>
<dbReference type="SMR" id="Q5Z818"/>
<dbReference type="FunCoup" id="Q5Z818">
    <property type="interactions" value="922"/>
</dbReference>
<dbReference type="STRING" id="39947.Q5Z818"/>
<dbReference type="PaxDb" id="39947-Q5Z818"/>
<dbReference type="EnsemblPlants" id="Os06t0703500-01">
    <property type="protein sequence ID" value="Os06t0703500-01"/>
    <property type="gene ID" value="Os06g0703500"/>
</dbReference>
<dbReference type="EnsemblPlants" id="Os06t0703500-02">
    <property type="protein sequence ID" value="Os06t0703500-02"/>
    <property type="gene ID" value="Os06g0703500"/>
</dbReference>
<dbReference type="GeneID" id="4341986"/>
<dbReference type="Gramene" id="Os06t0703500-01">
    <property type="protein sequence ID" value="Os06t0703500-01"/>
    <property type="gene ID" value="Os06g0703500"/>
</dbReference>
<dbReference type="Gramene" id="Os06t0703500-02">
    <property type="protein sequence ID" value="Os06t0703500-02"/>
    <property type="gene ID" value="Os06g0703500"/>
</dbReference>
<dbReference type="KEGG" id="dosa:Os06g0703500"/>
<dbReference type="KEGG" id="osa:4341986"/>
<dbReference type="eggNOG" id="ENOG502QTXG">
    <property type="taxonomic scope" value="Eukaryota"/>
</dbReference>
<dbReference type="HOGENOM" id="CLU_026055_2_0_1"/>
<dbReference type="InParanoid" id="Q5Z818"/>
<dbReference type="OMA" id="MEWEIDG"/>
<dbReference type="OrthoDB" id="514967at2759"/>
<dbReference type="Proteomes" id="UP000000763">
    <property type="component" value="Chromosome 6"/>
</dbReference>
<dbReference type="Proteomes" id="UP000007752">
    <property type="component" value="Chromosome 6"/>
</dbReference>
<dbReference type="Proteomes" id="UP000059680">
    <property type="component" value="Chromosome 6"/>
</dbReference>
<dbReference type="ExpressionAtlas" id="Q5Z818">
    <property type="expression patterns" value="baseline and differential"/>
</dbReference>
<dbReference type="GO" id="GO:0005634">
    <property type="term" value="C:nucleus"/>
    <property type="evidence" value="ECO:0007669"/>
    <property type="project" value="UniProtKB-SubCell"/>
</dbReference>
<dbReference type="GO" id="GO:0003677">
    <property type="term" value="F:DNA binding"/>
    <property type="evidence" value="ECO:0007669"/>
    <property type="project" value="UniProtKB-KW"/>
</dbReference>
<dbReference type="GO" id="GO:0008270">
    <property type="term" value="F:zinc ion binding"/>
    <property type="evidence" value="ECO:0007669"/>
    <property type="project" value="UniProtKB-KW"/>
</dbReference>
<dbReference type="FunFam" id="4.10.1100.10:FF:000001">
    <property type="entry name" value="Squamosa promoter-binding-like protein 14"/>
    <property type="match status" value="1"/>
</dbReference>
<dbReference type="Gene3D" id="4.10.1100.10">
    <property type="entry name" value="Transcription factor, SBP-box domain"/>
    <property type="match status" value="1"/>
</dbReference>
<dbReference type="InterPro" id="IPR044817">
    <property type="entry name" value="SBP-like"/>
</dbReference>
<dbReference type="InterPro" id="IPR004333">
    <property type="entry name" value="SBP_dom"/>
</dbReference>
<dbReference type="InterPro" id="IPR036893">
    <property type="entry name" value="SBP_sf"/>
</dbReference>
<dbReference type="PANTHER" id="PTHR31251:SF74">
    <property type="entry name" value="SQUAMOSA PROMOTER-BINDING-LIKE PROTEIN 2"/>
    <property type="match status" value="1"/>
</dbReference>
<dbReference type="PANTHER" id="PTHR31251">
    <property type="entry name" value="SQUAMOSA PROMOTER-BINDING-LIKE PROTEIN 4"/>
    <property type="match status" value="1"/>
</dbReference>
<dbReference type="Pfam" id="PF03110">
    <property type="entry name" value="SBP"/>
    <property type="match status" value="1"/>
</dbReference>
<dbReference type="SUPFAM" id="SSF103612">
    <property type="entry name" value="SBT domain"/>
    <property type="match status" value="1"/>
</dbReference>
<dbReference type="PROSITE" id="PS51141">
    <property type="entry name" value="ZF_SBP"/>
    <property type="match status" value="1"/>
</dbReference>